<organism>
    <name type="scientific">Xanthomonas euvesicatoria pv. vesicatoria (strain 85-10)</name>
    <name type="common">Xanthomonas campestris pv. vesicatoria</name>
    <dbReference type="NCBI Taxonomy" id="316273"/>
    <lineage>
        <taxon>Bacteria</taxon>
        <taxon>Pseudomonadati</taxon>
        <taxon>Pseudomonadota</taxon>
        <taxon>Gammaproteobacteria</taxon>
        <taxon>Lysobacterales</taxon>
        <taxon>Lysobacteraceae</taxon>
        <taxon>Xanthomonas</taxon>
    </lineage>
</organism>
<proteinExistence type="inferred from homology"/>
<reference key="1">
    <citation type="journal article" date="2005" name="J. Bacteriol.">
        <title>Insights into genome plasticity and pathogenicity of the plant pathogenic Bacterium Xanthomonas campestris pv. vesicatoria revealed by the complete genome sequence.</title>
        <authorList>
            <person name="Thieme F."/>
            <person name="Koebnik R."/>
            <person name="Bekel T."/>
            <person name="Berger C."/>
            <person name="Boch J."/>
            <person name="Buettner D."/>
            <person name="Caldana C."/>
            <person name="Gaigalat L."/>
            <person name="Goesmann A."/>
            <person name="Kay S."/>
            <person name="Kirchner O."/>
            <person name="Lanz C."/>
            <person name="Linke B."/>
            <person name="McHardy A.C."/>
            <person name="Meyer F."/>
            <person name="Mittenhuber G."/>
            <person name="Nies D.H."/>
            <person name="Niesbach-Kloesgen U."/>
            <person name="Patschkowski T."/>
            <person name="Rueckert C."/>
            <person name="Rupp O."/>
            <person name="Schneiker S."/>
            <person name="Schuster S.C."/>
            <person name="Vorhoelter F.J."/>
            <person name="Weber E."/>
            <person name="Puehler A."/>
            <person name="Bonas U."/>
            <person name="Bartels D."/>
            <person name="Kaiser O."/>
        </authorList>
    </citation>
    <scope>NUCLEOTIDE SEQUENCE [LARGE SCALE GENOMIC DNA]</scope>
    <source>
        <strain>85-10</strain>
    </source>
</reference>
<gene>
    <name evidence="1" type="primary">pqqD</name>
    <name type="ordered locus">XCV3247</name>
</gene>
<name>PQQD_XANE5</name>
<feature type="chain" id="PRO_1000061693" description="PqqA binding protein">
    <location>
        <begin position="1"/>
        <end position="92"/>
    </location>
</feature>
<comment type="function">
    <text evidence="1">Functions as a PqqA binding protein and presents PqqA to PqqE, in the pyrroloquinoline quinone (PQQ) biosynthetic pathway.</text>
</comment>
<comment type="pathway">
    <text evidence="1">Cofactor biosynthesis; pyrroloquinoline quinone biosynthesis.</text>
</comment>
<comment type="subunit">
    <text evidence="1">Monomer. Interacts with PqqE.</text>
</comment>
<comment type="similarity">
    <text evidence="1">Belongs to the PqqD family.</text>
</comment>
<evidence type="ECO:0000255" key="1">
    <source>
        <dbReference type="HAMAP-Rule" id="MF_00655"/>
    </source>
</evidence>
<accession>Q3BQI5</accession>
<keyword id="KW-0884">PQQ biosynthesis</keyword>
<protein>
    <recommendedName>
        <fullName evidence="1">PqqA binding protein</fullName>
    </recommendedName>
    <alternativeName>
        <fullName evidence="1">Coenzyme PQQ synthesis protein D</fullName>
    </alternativeName>
    <alternativeName>
        <fullName evidence="1">Pyrroloquinoline quinone biosynthesis protein D</fullName>
    </alternativeName>
</protein>
<dbReference type="EMBL" id="AM039952">
    <property type="protein sequence ID" value="CAJ24978.1"/>
    <property type="molecule type" value="Genomic_DNA"/>
</dbReference>
<dbReference type="RefSeq" id="WP_011348254.1">
    <property type="nucleotide sequence ID" value="NZ_CP017190.1"/>
</dbReference>
<dbReference type="SMR" id="Q3BQI5"/>
<dbReference type="STRING" id="456327.BJD11_06545"/>
<dbReference type="GeneID" id="63992254"/>
<dbReference type="KEGG" id="xcv:XCV3247"/>
<dbReference type="eggNOG" id="COG0535">
    <property type="taxonomic scope" value="Bacteria"/>
</dbReference>
<dbReference type="HOGENOM" id="CLU_163864_0_0_6"/>
<dbReference type="UniPathway" id="UPA00539"/>
<dbReference type="Proteomes" id="UP000007069">
    <property type="component" value="Chromosome"/>
</dbReference>
<dbReference type="GO" id="GO:0048038">
    <property type="term" value="F:quinone binding"/>
    <property type="evidence" value="ECO:0007669"/>
    <property type="project" value="InterPro"/>
</dbReference>
<dbReference type="GO" id="GO:0018189">
    <property type="term" value="P:pyrroloquinoline quinone biosynthetic process"/>
    <property type="evidence" value="ECO:0007669"/>
    <property type="project" value="UniProtKB-UniRule"/>
</dbReference>
<dbReference type="Gene3D" id="1.10.10.1150">
    <property type="entry name" value="Coenzyme PQQ synthesis protein D (PqqD)"/>
    <property type="match status" value="1"/>
</dbReference>
<dbReference type="HAMAP" id="MF_00655">
    <property type="entry name" value="PQQ_syn_PqqD"/>
    <property type="match status" value="1"/>
</dbReference>
<dbReference type="InterPro" id="IPR008792">
    <property type="entry name" value="PQQD"/>
</dbReference>
<dbReference type="InterPro" id="IPR022479">
    <property type="entry name" value="PqqD_bac"/>
</dbReference>
<dbReference type="InterPro" id="IPR041881">
    <property type="entry name" value="PqqD_sf"/>
</dbReference>
<dbReference type="NCBIfam" id="TIGR03859">
    <property type="entry name" value="PQQ_PqqD"/>
    <property type="match status" value="1"/>
</dbReference>
<dbReference type="Pfam" id="PF05402">
    <property type="entry name" value="PqqD"/>
    <property type="match status" value="1"/>
</dbReference>
<sequence length="92" mass="10356">MSGITRHSQPSLRAGVRLQHDRARDQWVLLAPERVVELDDIALVVAQRYDGTRSLAQIAQELAAEFDADAAQIEADVIELTDTLHQKRLLRL</sequence>